<reference key="1">
    <citation type="journal article" date="2005" name="Nucleic Acids Res.">
        <title>Genomic blueprint of Hahella chejuensis, a marine microbe producing an algicidal agent.</title>
        <authorList>
            <person name="Jeong H."/>
            <person name="Yim J.H."/>
            <person name="Lee C."/>
            <person name="Choi S.-H."/>
            <person name="Park Y.K."/>
            <person name="Yoon S.H."/>
            <person name="Hur C.-G."/>
            <person name="Kang H.-Y."/>
            <person name="Kim D."/>
            <person name="Lee H.H."/>
            <person name="Park K.H."/>
            <person name="Park S.-H."/>
            <person name="Park H.-S."/>
            <person name="Lee H.K."/>
            <person name="Oh T.K."/>
            <person name="Kim J.F."/>
        </authorList>
    </citation>
    <scope>NUCLEOTIDE SEQUENCE [LARGE SCALE GENOMIC DNA]</scope>
    <source>
        <strain>KCTC 2396</strain>
    </source>
</reference>
<proteinExistence type="inferred from homology"/>
<comment type="similarity">
    <text evidence="1">Belongs to the bacterial ribosomal protein bL35 family.</text>
</comment>
<protein>
    <recommendedName>
        <fullName evidence="1">Large ribosomal subunit protein bL35</fullName>
    </recommendedName>
    <alternativeName>
        <fullName evidence="3">50S ribosomal protein L35</fullName>
    </alternativeName>
</protein>
<keyword id="KW-1185">Reference proteome</keyword>
<keyword id="KW-0687">Ribonucleoprotein</keyword>
<keyword id="KW-0689">Ribosomal protein</keyword>
<feature type="chain" id="PRO_0000258687" description="Large ribosomal subunit protein bL35">
    <location>
        <begin position="1"/>
        <end position="63"/>
    </location>
</feature>
<feature type="region of interest" description="Disordered" evidence="2">
    <location>
        <begin position="1"/>
        <end position="55"/>
    </location>
</feature>
<feature type="compositionally biased region" description="Basic residues" evidence="2">
    <location>
        <begin position="1"/>
        <end position="25"/>
    </location>
</feature>
<feature type="compositionally biased region" description="Basic residues" evidence="2">
    <location>
        <begin position="32"/>
        <end position="47"/>
    </location>
</feature>
<dbReference type="EMBL" id="CP000155">
    <property type="protein sequence ID" value="ABC31280.1"/>
    <property type="molecule type" value="Genomic_DNA"/>
</dbReference>
<dbReference type="RefSeq" id="WP_011398345.1">
    <property type="nucleotide sequence ID" value="NC_007645.1"/>
</dbReference>
<dbReference type="SMR" id="Q2SDJ4"/>
<dbReference type="STRING" id="349521.HCH_04578"/>
<dbReference type="KEGG" id="hch:HCH_04578"/>
<dbReference type="eggNOG" id="COG0291">
    <property type="taxonomic scope" value="Bacteria"/>
</dbReference>
<dbReference type="HOGENOM" id="CLU_169643_1_1_6"/>
<dbReference type="OrthoDB" id="47476at2"/>
<dbReference type="Proteomes" id="UP000000238">
    <property type="component" value="Chromosome"/>
</dbReference>
<dbReference type="GO" id="GO:0022625">
    <property type="term" value="C:cytosolic large ribosomal subunit"/>
    <property type="evidence" value="ECO:0007669"/>
    <property type="project" value="TreeGrafter"/>
</dbReference>
<dbReference type="GO" id="GO:0003735">
    <property type="term" value="F:structural constituent of ribosome"/>
    <property type="evidence" value="ECO:0007669"/>
    <property type="project" value="InterPro"/>
</dbReference>
<dbReference type="GO" id="GO:0006412">
    <property type="term" value="P:translation"/>
    <property type="evidence" value="ECO:0007669"/>
    <property type="project" value="UniProtKB-UniRule"/>
</dbReference>
<dbReference type="FunFam" id="4.10.410.60:FF:000001">
    <property type="entry name" value="50S ribosomal protein L35"/>
    <property type="match status" value="1"/>
</dbReference>
<dbReference type="Gene3D" id="4.10.410.60">
    <property type="match status" value="1"/>
</dbReference>
<dbReference type="HAMAP" id="MF_00514">
    <property type="entry name" value="Ribosomal_bL35"/>
    <property type="match status" value="1"/>
</dbReference>
<dbReference type="InterPro" id="IPR001706">
    <property type="entry name" value="Ribosomal_bL35"/>
</dbReference>
<dbReference type="InterPro" id="IPR021137">
    <property type="entry name" value="Ribosomal_bL35-like"/>
</dbReference>
<dbReference type="InterPro" id="IPR018265">
    <property type="entry name" value="Ribosomal_bL35_CS"/>
</dbReference>
<dbReference type="InterPro" id="IPR037229">
    <property type="entry name" value="Ribosomal_bL35_sf"/>
</dbReference>
<dbReference type="NCBIfam" id="TIGR00001">
    <property type="entry name" value="rpmI_bact"/>
    <property type="match status" value="1"/>
</dbReference>
<dbReference type="PANTHER" id="PTHR33343">
    <property type="entry name" value="54S RIBOSOMAL PROTEIN BL35M"/>
    <property type="match status" value="1"/>
</dbReference>
<dbReference type="PANTHER" id="PTHR33343:SF1">
    <property type="entry name" value="LARGE RIBOSOMAL SUBUNIT PROTEIN BL35M"/>
    <property type="match status" value="1"/>
</dbReference>
<dbReference type="Pfam" id="PF01632">
    <property type="entry name" value="Ribosomal_L35p"/>
    <property type="match status" value="1"/>
</dbReference>
<dbReference type="PRINTS" id="PR00064">
    <property type="entry name" value="RIBOSOMALL35"/>
</dbReference>
<dbReference type="SUPFAM" id="SSF143034">
    <property type="entry name" value="L35p-like"/>
    <property type="match status" value="1"/>
</dbReference>
<dbReference type="PROSITE" id="PS00936">
    <property type="entry name" value="RIBOSOMAL_L35"/>
    <property type="match status" value="1"/>
</dbReference>
<evidence type="ECO:0000255" key="1">
    <source>
        <dbReference type="HAMAP-Rule" id="MF_00514"/>
    </source>
</evidence>
<evidence type="ECO:0000256" key="2">
    <source>
        <dbReference type="SAM" id="MobiDB-lite"/>
    </source>
</evidence>
<evidence type="ECO:0000305" key="3"/>
<sequence length="63" mass="7377">MPKMKSKSSAAKRFKKTANGFKHRQSFTSHILTKKSTKRKRHLRPKKQVNPSDVPLIKRMLCQ</sequence>
<organism>
    <name type="scientific">Hahella chejuensis (strain KCTC 2396)</name>
    <dbReference type="NCBI Taxonomy" id="349521"/>
    <lineage>
        <taxon>Bacteria</taxon>
        <taxon>Pseudomonadati</taxon>
        <taxon>Pseudomonadota</taxon>
        <taxon>Gammaproteobacteria</taxon>
        <taxon>Oceanospirillales</taxon>
        <taxon>Hahellaceae</taxon>
        <taxon>Hahella</taxon>
    </lineage>
</organism>
<gene>
    <name evidence="1" type="primary">rpmI</name>
    <name type="ordered locus">HCH_04578</name>
</gene>
<accession>Q2SDJ4</accession>
<name>RL35_HAHCH</name>